<protein>
    <recommendedName>
        <fullName>Actin-related protein 2-A</fullName>
    </recommendedName>
    <alternativeName>
        <fullName>Actin-like protein 2-A</fullName>
    </alternativeName>
</protein>
<accession>Q7ZTP2</accession>
<evidence type="ECO:0000250" key="1">
    <source>
        <dbReference type="UniProtKB" id="A7MB62"/>
    </source>
</evidence>
<evidence type="ECO:0000250" key="2">
    <source>
        <dbReference type="UniProtKB" id="P61160"/>
    </source>
</evidence>
<evidence type="ECO:0000269" key="3">
    <source>
    </source>
</evidence>
<evidence type="ECO:0000269" key="4">
    <source>
    </source>
</evidence>
<evidence type="ECO:0000305" key="5"/>
<evidence type="ECO:0000305" key="6">
    <source>
    </source>
</evidence>
<sequence>MDSQGKKVVVCDNGTGFVKCGYAGSNFPEHIFPALVGRPVIRSTAKVGNIEIKDLMVGDEASELRSMLEVNYPMENGIVRNWDDMKHLWDYTFGPEKLNIDTRDCKILLTEPPMNPTKNREKIVEVMFETYQFSGVYVAIQAVLTLYAQGLLTGVVVDSGDGVTHICPVYEGFSLPHLTRRLDIAGRDITRYLIKLLLLRGYAFNHSADFETVRMIKEKLCYVGYNIEQEQKLALETTVLVESYTLPDGRVIKVGGERFEAPEALFQPHLINVEGVGVAELLFNTIQAADIDTRAEFYKHIVLSGGSTMYPGLPSRLERELKQLYLERVLKGDVEKLSKFKIRIEDPPRRKHMVFLGGAVLADIMKDKDNFWMTRQEYQEKGTRVLEKLGVTVR</sequence>
<feature type="chain" id="PRO_0000327249" description="Actin-related protein 2-A">
    <location>
        <begin position="1"/>
        <end position="394"/>
    </location>
</feature>
<feature type="binding site" evidence="1">
    <location>
        <begin position="160"/>
        <end position="162"/>
    </location>
    <ligand>
        <name>ATP</name>
        <dbReference type="ChEBI" id="CHEBI:30616"/>
    </ligand>
</feature>
<feature type="binding site" evidence="1">
    <location>
        <begin position="214"/>
        <end position="218"/>
    </location>
    <ligand>
        <name>ATP</name>
        <dbReference type="ChEBI" id="CHEBI:30616"/>
    </ligand>
</feature>
<feature type="binding site" evidence="1">
    <location>
        <begin position="305"/>
        <end position="310"/>
    </location>
    <ligand>
        <name>ATP</name>
        <dbReference type="ChEBI" id="CHEBI:30616"/>
    </ligand>
</feature>
<dbReference type="EMBL" id="EF011865">
    <property type="protein sequence ID" value="ABL63898.1"/>
    <property type="molecule type" value="mRNA"/>
</dbReference>
<dbReference type="EMBL" id="BC043992">
    <property type="protein sequence ID" value="AAH43992.1"/>
    <property type="molecule type" value="mRNA"/>
</dbReference>
<dbReference type="RefSeq" id="NP_001089193.1">
    <property type="nucleotide sequence ID" value="NM_001095724.1"/>
</dbReference>
<dbReference type="SMR" id="Q7ZTP2"/>
<dbReference type="BioGRID" id="592020">
    <property type="interactions" value="1"/>
</dbReference>
<dbReference type="DNASU" id="734239"/>
<dbReference type="GeneID" id="734239"/>
<dbReference type="KEGG" id="xla:734239"/>
<dbReference type="AGR" id="Xenbase:XB-GENE-489002"/>
<dbReference type="CTD" id="734239"/>
<dbReference type="OMA" id="NISVYML"/>
<dbReference type="OrthoDB" id="10251209at2759"/>
<dbReference type="Proteomes" id="UP000186698">
    <property type="component" value="Chromosome 5S"/>
</dbReference>
<dbReference type="Bgee" id="734239">
    <property type="expression patterns" value="Expressed in spleen and 19 other cell types or tissues"/>
</dbReference>
<dbReference type="GO" id="GO:0005885">
    <property type="term" value="C:Arp2/3 protein complex"/>
    <property type="evidence" value="ECO:0000314"/>
    <property type="project" value="UniProtKB"/>
</dbReference>
<dbReference type="GO" id="GO:0005938">
    <property type="term" value="C:cell cortex"/>
    <property type="evidence" value="ECO:0000318"/>
    <property type="project" value="GO_Central"/>
</dbReference>
<dbReference type="GO" id="GO:0042995">
    <property type="term" value="C:cell projection"/>
    <property type="evidence" value="ECO:0007669"/>
    <property type="project" value="UniProtKB-SubCell"/>
</dbReference>
<dbReference type="GO" id="GO:0005737">
    <property type="term" value="C:cytoplasm"/>
    <property type="evidence" value="ECO:0000250"/>
    <property type="project" value="UniProtKB"/>
</dbReference>
<dbReference type="GO" id="GO:0005634">
    <property type="term" value="C:nucleus"/>
    <property type="evidence" value="ECO:0000314"/>
    <property type="project" value="UniProtKB"/>
</dbReference>
<dbReference type="GO" id="GO:0035861">
    <property type="term" value="C:site of double-strand break"/>
    <property type="evidence" value="ECO:0000314"/>
    <property type="project" value="UniProtKB"/>
</dbReference>
<dbReference type="GO" id="GO:0003779">
    <property type="term" value="F:actin binding"/>
    <property type="evidence" value="ECO:0007669"/>
    <property type="project" value="UniProtKB-KW"/>
</dbReference>
<dbReference type="GO" id="GO:0005524">
    <property type="term" value="F:ATP binding"/>
    <property type="evidence" value="ECO:0007669"/>
    <property type="project" value="UniProtKB-KW"/>
</dbReference>
<dbReference type="GO" id="GO:0034314">
    <property type="term" value="P:Arp2/3 complex-mediated actin nucleation"/>
    <property type="evidence" value="ECO:0000250"/>
    <property type="project" value="UniProtKB"/>
</dbReference>
<dbReference type="GO" id="GO:1905168">
    <property type="term" value="P:positive regulation of double-strand break repair via homologous recombination"/>
    <property type="evidence" value="ECO:0000250"/>
    <property type="project" value="UniProtKB"/>
</dbReference>
<dbReference type="GO" id="GO:0045944">
    <property type="term" value="P:positive regulation of transcription by RNA polymerase II"/>
    <property type="evidence" value="ECO:0000250"/>
    <property type="project" value="UniProtKB"/>
</dbReference>
<dbReference type="CDD" id="cd10220">
    <property type="entry name" value="ASKHA_NBD_Arp2"/>
    <property type="match status" value="1"/>
</dbReference>
<dbReference type="FunFam" id="3.30.420.40:FF:000538">
    <property type="entry name" value="Actin-related protein 2"/>
    <property type="match status" value="1"/>
</dbReference>
<dbReference type="FunFam" id="3.90.640.10:FF:000005">
    <property type="entry name" value="Actin-related protein 2"/>
    <property type="match status" value="1"/>
</dbReference>
<dbReference type="Gene3D" id="3.30.420.40">
    <property type="match status" value="2"/>
</dbReference>
<dbReference type="Gene3D" id="3.90.640.10">
    <property type="entry name" value="Actin, Chain A, domain 4"/>
    <property type="match status" value="1"/>
</dbReference>
<dbReference type="InterPro" id="IPR004000">
    <property type="entry name" value="Actin"/>
</dbReference>
<dbReference type="InterPro" id="IPR020902">
    <property type="entry name" value="Actin/actin-like_CS"/>
</dbReference>
<dbReference type="InterPro" id="IPR043129">
    <property type="entry name" value="ATPase_NBD"/>
</dbReference>
<dbReference type="PANTHER" id="PTHR11937">
    <property type="entry name" value="ACTIN"/>
    <property type="match status" value="1"/>
</dbReference>
<dbReference type="Pfam" id="PF00022">
    <property type="entry name" value="Actin"/>
    <property type="match status" value="1"/>
</dbReference>
<dbReference type="PRINTS" id="PR00190">
    <property type="entry name" value="ACTIN"/>
</dbReference>
<dbReference type="SMART" id="SM00268">
    <property type="entry name" value="ACTIN"/>
    <property type="match status" value="1"/>
</dbReference>
<dbReference type="SUPFAM" id="SSF53067">
    <property type="entry name" value="Actin-like ATPase domain"/>
    <property type="match status" value="2"/>
</dbReference>
<dbReference type="PROSITE" id="PS01132">
    <property type="entry name" value="ACTINS_ACT_LIKE"/>
    <property type="match status" value="1"/>
</dbReference>
<gene>
    <name type="primary">actr2-a</name>
    <name type="synonym">arp2-a</name>
</gene>
<name>ARP2A_XENLA</name>
<comment type="function">
    <text evidence="2 3 6">ATP-binding component of the Arp2/3 complex, a multiprotein complex that mediates actin polymerization upon stimulation by nucleation-promoting factor (NPF) (PubMed:17178911). The Arp2/3 complex mediates the formation of branched actin networks in the cytoplasm, providing the force for cell motility (PubMed:17178911). Seems to contact the pointed end of the daughter actin filament (PubMed:17178911). In addition to its role in the cytoplasmic cytoskeleton, the Arp2/3 complex also promotes actin polymerization in the nucleus, thereby regulating gene transcription and repair of damaged DNA (Probable). The Arp2/3 complex promotes homologous recombination (HR) repair in response to DNA damage by promoting nuclear actin polymerization, leading to drive motility of double-strand breaks (DSBs) (By similarity).</text>
</comment>
<comment type="subunit">
    <text evidence="4">Component of the Arp2/3 complex composed of actr2/arp2, actr3/arp3, arpc1 (arpc1a or arpc1b), arpc2, arpc3, arpc4 and arpc5.</text>
</comment>
<comment type="subcellular location">
    <subcellularLocation>
        <location evidence="3">Cytoplasm</location>
        <location evidence="3">Cytoskeleton</location>
    </subcellularLocation>
    <subcellularLocation>
        <location evidence="3">Cell projection</location>
    </subcellularLocation>
    <subcellularLocation>
        <location evidence="4">Nucleus</location>
    </subcellularLocation>
</comment>
<comment type="similarity">
    <text evidence="5">Belongs to the actin family. ARP2 subfamily.</text>
</comment>
<proteinExistence type="evidence at protein level"/>
<keyword id="KW-0009">Actin-binding</keyword>
<keyword id="KW-0067">ATP-binding</keyword>
<keyword id="KW-0966">Cell projection</keyword>
<keyword id="KW-0963">Cytoplasm</keyword>
<keyword id="KW-0206">Cytoskeleton</keyword>
<keyword id="KW-0547">Nucleotide-binding</keyword>
<keyword id="KW-0539">Nucleus</keyword>
<keyword id="KW-1185">Reference proteome</keyword>
<reference key="1">
    <citation type="journal article" date="2006" name="J. Cell Biol.">
        <title>Actin turnover-dependent fast dissociation of capping protein in the dendritic nucleation actin network: evidence of frequent filament severing.</title>
        <authorList>
            <person name="Miyoshi T."/>
            <person name="Tsuji T."/>
            <person name="Higashida C."/>
            <person name="Hertzog M."/>
            <person name="Fujita A."/>
            <person name="Narumiya S."/>
            <person name="Scita G."/>
            <person name="Watanabe N."/>
        </authorList>
    </citation>
    <scope>NUCLEOTIDE SEQUENCE [MRNA]</scope>
    <scope>SUBCELLULAR LOCATION</scope>
    <scope>FUNCTION</scope>
</reference>
<reference key="2">
    <citation type="submission" date="2003-01" db="EMBL/GenBank/DDBJ databases">
        <authorList>
            <consortium name="NIH - Xenopus Gene Collection (XGC) project"/>
        </authorList>
    </citation>
    <scope>NUCLEOTIDE SEQUENCE [LARGE SCALE MRNA]</scope>
    <source>
        <tissue>Embryo</tissue>
    </source>
</reference>
<reference key="3">
    <citation type="journal article" date="2018" name="Nature">
        <title>Nuclear ARP2/3 drives DNA break clustering for homology-directed repair.</title>
        <authorList>
            <person name="Schrank B.R."/>
            <person name="Aparicio T."/>
            <person name="Li Y."/>
            <person name="Chang W."/>
            <person name="Chait B.T."/>
            <person name="Gundersen G.G."/>
            <person name="Gottesman M.E."/>
            <person name="Gautier J."/>
        </authorList>
    </citation>
    <scope>FUNCTION</scope>
    <scope>SUBCELLULAR LOCATION</scope>
    <scope>IDENTIFICATION IN THE ARP2/3 COMPLEX</scope>
    <scope>IDENTIFICATION BY MASS SPECTROMETRY</scope>
</reference>
<organism>
    <name type="scientific">Xenopus laevis</name>
    <name type="common">African clawed frog</name>
    <dbReference type="NCBI Taxonomy" id="8355"/>
    <lineage>
        <taxon>Eukaryota</taxon>
        <taxon>Metazoa</taxon>
        <taxon>Chordata</taxon>
        <taxon>Craniata</taxon>
        <taxon>Vertebrata</taxon>
        <taxon>Euteleostomi</taxon>
        <taxon>Amphibia</taxon>
        <taxon>Batrachia</taxon>
        <taxon>Anura</taxon>
        <taxon>Pipoidea</taxon>
        <taxon>Pipidae</taxon>
        <taxon>Xenopodinae</taxon>
        <taxon>Xenopus</taxon>
        <taxon>Xenopus</taxon>
    </lineage>
</organism>